<comment type="function">
    <text evidence="1">Endonuclease that specifically degrades the RNA of RNA-DNA hybrids.</text>
</comment>
<comment type="catalytic activity">
    <reaction evidence="1">
        <text>Endonucleolytic cleavage to 5'-phosphomonoester.</text>
        <dbReference type="EC" id="3.1.26.4"/>
    </reaction>
</comment>
<comment type="cofactor">
    <cofactor evidence="1">
        <name>Mn(2+)</name>
        <dbReference type="ChEBI" id="CHEBI:29035"/>
    </cofactor>
    <cofactor evidence="1">
        <name>Mg(2+)</name>
        <dbReference type="ChEBI" id="CHEBI:18420"/>
    </cofactor>
    <text evidence="1">Manganese or magnesium. Binds 1 divalent metal ion per monomer in the absence of substrate. May bind a second metal ion after substrate binding.</text>
</comment>
<comment type="subcellular location">
    <subcellularLocation>
        <location evidence="1">Cytoplasm</location>
    </subcellularLocation>
</comment>
<comment type="similarity">
    <text evidence="1">Belongs to the RNase HII family.</text>
</comment>
<sequence length="209" mass="22221">MRSRTSLLEQAALDWHPPGLVAGVDEAGRGPLAGPVVAAAVILDDLQPIAGLADSKVLTAARREKLYDEIRAKALCCSIAEASVEEIDQHNILQATMLAMRRAVLGLRLKPVRVLVDGNRLPPLDVPAEAIVKGDALVASISAASILAKVTRDRWCAQLHQQYPVYGFAGHKGYGTAEHLAALEVHGACPQHRRSFAPVARALQAPVAA</sequence>
<dbReference type="EC" id="3.1.26.4" evidence="1"/>
<dbReference type="EMBL" id="CP000539">
    <property type="protein sequence ID" value="ABM42729.1"/>
    <property type="molecule type" value="Genomic_DNA"/>
</dbReference>
<dbReference type="SMR" id="A1W904"/>
<dbReference type="STRING" id="232721.Ajs_2571"/>
<dbReference type="KEGG" id="ajs:Ajs_2571"/>
<dbReference type="eggNOG" id="COG0164">
    <property type="taxonomic scope" value="Bacteria"/>
</dbReference>
<dbReference type="HOGENOM" id="CLU_036532_3_2_4"/>
<dbReference type="Proteomes" id="UP000000645">
    <property type="component" value="Chromosome"/>
</dbReference>
<dbReference type="GO" id="GO:0005737">
    <property type="term" value="C:cytoplasm"/>
    <property type="evidence" value="ECO:0007669"/>
    <property type="project" value="UniProtKB-SubCell"/>
</dbReference>
<dbReference type="GO" id="GO:0032299">
    <property type="term" value="C:ribonuclease H2 complex"/>
    <property type="evidence" value="ECO:0007669"/>
    <property type="project" value="TreeGrafter"/>
</dbReference>
<dbReference type="GO" id="GO:0030145">
    <property type="term" value="F:manganese ion binding"/>
    <property type="evidence" value="ECO:0007669"/>
    <property type="project" value="UniProtKB-UniRule"/>
</dbReference>
<dbReference type="GO" id="GO:0003723">
    <property type="term" value="F:RNA binding"/>
    <property type="evidence" value="ECO:0007669"/>
    <property type="project" value="InterPro"/>
</dbReference>
<dbReference type="GO" id="GO:0004523">
    <property type="term" value="F:RNA-DNA hybrid ribonuclease activity"/>
    <property type="evidence" value="ECO:0007669"/>
    <property type="project" value="UniProtKB-UniRule"/>
</dbReference>
<dbReference type="GO" id="GO:0043137">
    <property type="term" value="P:DNA replication, removal of RNA primer"/>
    <property type="evidence" value="ECO:0007669"/>
    <property type="project" value="TreeGrafter"/>
</dbReference>
<dbReference type="GO" id="GO:0006298">
    <property type="term" value="P:mismatch repair"/>
    <property type="evidence" value="ECO:0007669"/>
    <property type="project" value="TreeGrafter"/>
</dbReference>
<dbReference type="CDD" id="cd07182">
    <property type="entry name" value="RNase_HII_bacteria_HII_like"/>
    <property type="match status" value="1"/>
</dbReference>
<dbReference type="FunFam" id="3.30.420.10:FF:000006">
    <property type="entry name" value="Ribonuclease HII"/>
    <property type="match status" value="1"/>
</dbReference>
<dbReference type="Gene3D" id="3.30.420.10">
    <property type="entry name" value="Ribonuclease H-like superfamily/Ribonuclease H"/>
    <property type="match status" value="1"/>
</dbReference>
<dbReference type="HAMAP" id="MF_00052_B">
    <property type="entry name" value="RNase_HII_B"/>
    <property type="match status" value="1"/>
</dbReference>
<dbReference type="InterPro" id="IPR022898">
    <property type="entry name" value="RNase_HII"/>
</dbReference>
<dbReference type="InterPro" id="IPR001352">
    <property type="entry name" value="RNase_HII/HIII"/>
</dbReference>
<dbReference type="InterPro" id="IPR024567">
    <property type="entry name" value="RNase_HII/HIII_dom"/>
</dbReference>
<dbReference type="InterPro" id="IPR012337">
    <property type="entry name" value="RNaseH-like_sf"/>
</dbReference>
<dbReference type="InterPro" id="IPR036397">
    <property type="entry name" value="RNaseH_sf"/>
</dbReference>
<dbReference type="NCBIfam" id="NF000594">
    <property type="entry name" value="PRK00015.1-1"/>
    <property type="match status" value="1"/>
</dbReference>
<dbReference type="NCBIfam" id="NF000595">
    <property type="entry name" value="PRK00015.1-3"/>
    <property type="match status" value="1"/>
</dbReference>
<dbReference type="NCBIfam" id="NF000596">
    <property type="entry name" value="PRK00015.1-4"/>
    <property type="match status" value="1"/>
</dbReference>
<dbReference type="PANTHER" id="PTHR10954">
    <property type="entry name" value="RIBONUCLEASE H2 SUBUNIT A"/>
    <property type="match status" value="1"/>
</dbReference>
<dbReference type="PANTHER" id="PTHR10954:SF18">
    <property type="entry name" value="RIBONUCLEASE HII"/>
    <property type="match status" value="1"/>
</dbReference>
<dbReference type="Pfam" id="PF01351">
    <property type="entry name" value="RNase_HII"/>
    <property type="match status" value="1"/>
</dbReference>
<dbReference type="SUPFAM" id="SSF53098">
    <property type="entry name" value="Ribonuclease H-like"/>
    <property type="match status" value="1"/>
</dbReference>
<dbReference type="PROSITE" id="PS51975">
    <property type="entry name" value="RNASE_H_2"/>
    <property type="match status" value="1"/>
</dbReference>
<feature type="chain" id="PRO_0000334854" description="Ribonuclease HII">
    <location>
        <begin position="1"/>
        <end position="209"/>
    </location>
</feature>
<feature type="domain" description="RNase H type-2" evidence="2">
    <location>
        <begin position="19"/>
        <end position="208"/>
    </location>
</feature>
<feature type="binding site" evidence="1">
    <location>
        <position position="25"/>
    </location>
    <ligand>
        <name>a divalent metal cation</name>
        <dbReference type="ChEBI" id="CHEBI:60240"/>
    </ligand>
</feature>
<feature type="binding site" evidence="1">
    <location>
        <position position="26"/>
    </location>
    <ligand>
        <name>a divalent metal cation</name>
        <dbReference type="ChEBI" id="CHEBI:60240"/>
    </ligand>
</feature>
<feature type="binding site" evidence="1">
    <location>
        <position position="117"/>
    </location>
    <ligand>
        <name>a divalent metal cation</name>
        <dbReference type="ChEBI" id="CHEBI:60240"/>
    </ligand>
</feature>
<gene>
    <name evidence="1" type="primary">rnhB</name>
    <name type="ordered locus">Ajs_2571</name>
</gene>
<accession>A1W904</accession>
<reference key="1">
    <citation type="submission" date="2006-12" db="EMBL/GenBank/DDBJ databases">
        <title>Complete sequence of chromosome 1 of Acidovorax sp. JS42.</title>
        <authorList>
            <person name="Copeland A."/>
            <person name="Lucas S."/>
            <person name="Lapidus A."/>
            <person name="Barry K."/>
            <person name="Detter J.C."/>
            <person name="Glavina del Rio T."/>
            <person name="Dalin E."/>
            <person name="Tice H."/>
            <person name="Pitluck S."/>
            <person name="Chertkov O."/>
            <person name="Brettin T."/>
            <person name="Bruce D."/>
            <person name="Han C."/>
            <person name="Tapia R."/>
            <person name="Gilna P."/>
            <person name="Schmutz J."/>
            <person name="Larimer F."/>
            <person name="Land M."/>
            <person name="Hauser L."/>
            <person name="Kyrpides N."/>
            <person name="Kim E."/>
            <person name="Stahl D."/>
            <person name="Richardson P."/>
        </authorList>
    </citation>
    <scope>NUCLEOTIDE SEQUENCE [LARGE SCALE GENOMIC DNA]</scope>
    <source>
        <strain>JS42</strain>
    </source>
</reference>
<organism>
    <name type="scientific">Acidovorax sp. (strain JS42)</name>
    <dbReference type="NCBI Taxonomy" id="232721"/>
    <lineage>
        <taxon>Bacteria</taxon>
        <taxon>Pseudomonadati</taxon>
        <taxon>Pseudomonadota</taxon>
        <taxon>Betaproteobacteria</taxon>
        <taxon>Burkholderiales</taxon>
        <taxon>Comamonadaceae</taxon>
        <taxon>Acidovorax</taxon>
    </lineage>
</organism>
<proteinExistence type="inferred from homology"/>
<name>RNH2_ACISJ</name>
<keyword id="KW-0963">Cytoplasm</keyword>
<keyword id="KW-0255">Endonuclease</keyword>
<keyword id="KW-0378">Hydrolase</keyword>
<keyword id="KW-0464">Manganese</keyword>
<keyword id="KW-0479">Metal-binding</keyword>
<keyword id="KW-0540">Nuclease</keyword>
<protein>
    <recommendedName>
        <fullName evidence="1">Ribonuclease HII</fullName>
        <shortName evidence="1">RNase HII</shortName>
        <ecNumber evidence="1">3.1.26.4</ecNumber>
    </recommendedName>
</protein>
<evidence type="ECO:0000255" key="1">
    <source>
        <dbReference type="HAMAP-Rule" id="MF_00052"/>
    </source>
</evidence>
<evidence type="ECO:0000255" key="2">
    <source>
        <dbReference type="PROSITE-ProRule" id="PRU01319"/>
    </source>
</evidence>